<gene>
    <name evidence="1" type="primary">addA</name>
    <name type="synonym">rexA</name>
    <name type="ordered locus">USA300HOU_0926</name>
</gene>
<proteinExistence type="inferred from homology"/>
<protein>
    <recommendedName>
        <fullName evidence="1">ATP-dependent helicase/nuclease subunit A</fullName>
        <ecNumber evidence="1">3.1.-.-</ecNumber>
        <ecNumber evidence="1">5.6.2.4</ecNumber>
    </recommendedName>
    <alternativeName>
        <fullName evidence="1">ATP-dependent helicase/nuclease AddA</fullName>
    </alternativeName>
    <alternativeName>
        <fullName evidence="1">DNA 3'-5' helicase AddA</fullName>
    </alternativeName>
</protein>
<dbReference type="EC" id="3.1.-.-" evidence="1"/>
<dbReference type="EC" id="5.6.2.4" evidence="1"/>
<dbReference type="EMBL" id="CP000730">
    <property type="protein sequence ID" value="ABX28947.1"/>
    <property type="molecule type" value="Genomic_DNA"/>
</dbReference>
<dbReference type="RefSeq" id="WP_000154914.1">
    <property type="nucleotide sequence ID" value="NC_010079.1"/>
</dbReference>
<dbReference type="SMR" id="A8Z073"/>
<dbReference type="KEGG" id="sax:USA300HOU_0926"/>
<dbReference type="HOGENOM" id="CLU_001114_3_1_9"/>
<dbReference type="GO" id="GO:0005829">
    <property type="term" value="C:cytosol"/>
    <property type="evidence" value="ECO:0007669"/>
    <property type="project" value="TreeGrafter"/>
</dbReference>
<dbReference type="GO" id="GO:0033202">
    <property type="term" value="C:DNA helicase complex"/>
    <property type="evidence" value="ECO:0007669"/>
    <property type="project" value="TreeGrafter"/>
</dbReference>
<dbReference type="GO" id="GO:0043138">
    <property type="term" value="F:3'-5' DNA helicase activity"/>
    <property type="evidence" value="ECO:0007669"/>
    <property type="project" value="UniProtKB-UniRule"/>
</dbReference>
<dbReference type="GO" id="GO:0008408">
    <property type="term" value="F:3'-5' exonuclease activity"/>
    <property type="evidence" value="ECO:0007669"/>
    <property type="project" value="UniProtKB-UniRule"/>
</dbReference>
<dbReference type="GO" id="GO:0005524">
    <property type="term" value="F:ATP binding"/>
    <property type="evidence" value="ECO:0007669"/>
    <property type="project" value="UniProtKB-UniRule"/>
</dbReference>
<dbReference type="GO" id="GO:0016887">
    <property type="term" value="F:ATP hydrolysis activity"/>
    <property type="evidence" value="ECO:0007669"/>
    <property type="project" value="RHEA"/>
</dbReference>
<dbReference type="GO" id="GO:0003690">
    <property type="term" value="F:double-stranded DNA binding"/>
    <property type="evidence" value="ECO:0007669"/>
    <property type="project" value="UniProtKB-UniRule"/>
</dbReference>
<dbReference type="GO" id="GO:0000724">
    <property type="term" value="P:double-strand break repair via homologous recombination"/>
    <property type="evidence" value="ECO:0007669"/>
    <property type="project" value="UniProtKB-UniRule"/>
</dbReference>
<dbReference type="CDD" id="cd17932">
    <property type="entry name" value="DEXQc_UvrD"/>
    <property type="match status" value="2"/>
</dbReference>
<dbReference type="FunFam" id="3.40.50.300:FF:001196">
    <property type="entry name" value="ATP-dependent helicase/nuclease subunit A"/>
    <property type="match status" value="1"/>
</dbReference>
<dbReference type="FunFam" id="3.40.50.300:FF:001715">
    <property type="entry name" value="ATP-dependent helicase/nuclease subunit A"/>
    <property type="match status" value="1"/>
</dbReference>
<dbReference type="Gene3D" id="3.90.320.10">
    <property type="match status" value="1"/>
</dbReference>
<dbReference type="Gene3D" id="3.40.50.300">
    <property type="entry name" value="P-loop containing nucleotide triphosphate hydrolases"/>
    <property type="match status" value="4"/>
</dbReference>
<dbReference type="Gene3D" id="1.10.486.10">
    <property type="entry name" value="PCRA, domain 4"/>
    <property type="match status" value="1"/>
</dbReference>
<dbReference type="HAMAP" id="MF_01451">
    <property type="entry name" value="AddA"/>
    <property type="match status" value="1"/>
</dbReference>
<dbReference type="InterPro" id="IPR014152">
    <property type="entry name" value="AddA"/>
</dbReference>
<dbReference type="InterPro" id="IPR014017">
    <property type="entry name" value="DNA_helicase_UvrD-like_C"/>
</dbReference>
<dbReference type="InterPro" id="IPR000212">
    <property type="entry name" value="DNA_helicase_UvrD/REP"/>
</dbReference>
<dbReference type="InterPro" id="IPR027417">
    <property type="entry name" value="P-loop_NTPase"/>
</dbReference>
<dbReference type="InterPro" id="IPR011604">
    <property type="entry name" value="PDDEXK-like_dom_sf"/>
</dbReference>
<dbReference type="InterPro" id="IPR038726">
    <property type="entry name" value="PDDEXK_AddAB-type"/>
</dbReference>
<dbReference type="InterPro" id="IPR011335">
    <property type="entry name" value="Restrct_endonuc-II-like"/>
</dbReference>
<dbReference type="InterPro" id="IPR014016">
    <property type="entry name" value="UvrD-like_ATP-bd"/>
</dbReference>
<dbReference type="NCBIfam" id="TIGR02785">
    <property type="entry name" value="addA_Gpos"/>
    <property type="match status" value="1"/>
</dbReference>
<dbReference type="PANTHER" id="PTHR11070:SF48">
    <property type="entry name" value="ATP-DEPENDENT HELICASE_NUCLEASE SUBUNIT A"/>
    <property type="match status" value="1"/>
</dbReference>
<dbReference type="PANTHER" id="PTHR11070">
    <property type="entry name" value="UVRD / RECB / PCRA DNA HELICASE FAMILY MEMBER"/>
    <property type="match status" value="1"/>
</dbReference>
<dbReference type="Pfam" id="PF12705">
    <property type="entry name" value="PDDEXK_1"/>
    <property type="match status" value="1"/>
</dbReference>
<dbReference type="Pfam" id="PF00580">
    <property type="entry name" value="UvrD-helicase"/>
    <property type="match status" value="1"/>
</dbReference>
<dbReference type="Pfam" id="PF13361">
    <property type="entry name" value="UvrD_C"/>
    <property type="match status" value="1"/>
</dbReference>
<dbReference type="SUPFAM" id="SSF52540">
    <property type="entry name" value="P-loop containing nucleoside triphosphate hydrolases"/>
    <property type="match status" value="1"/>
</dbReference>
<dbReference type="SUPFAM" id="SSF52980">
    <property type="entry name" value="Restriction endonuclease-like"/>
    <property type="match status" value="1"/>
</dbReference>
<dbReference type="PROSITE" id="PS51198">
    <property type="entry name" value="UVRD_HELICASE_ATP_BIND"/>
    <property type="match status" value="1"/>
</dbReference>
<dbReference type="PROSITE" id="PS51217">
    <property type="entry name" value="UVRD_HELICASE_CTER"/>
    <property type="match status" value="1"/>
</dbReference>
<feature type="chain" id="PRO_0000379319" description="ATP-dependent helicase/nuclease subunit A">
    <location>
        <begin position="1"/>
        <end position="1217"/>
    </location>
</feature>
<feature type="domain" description="UvrD-like helicase ATP-binding" evidence="1">
    <location>
        <begin position="10"/>
        <end position="475"/>
    </location>
</feature>
<feature type="domain" description="UvrD-like helicase C-terminal" evidence="1">
    <location>
        <begin position="476"/>
        <end position="786"/>
    </location>
</feature>
<feature type="binding site" evidence="1">
    <location>
        <begin position="31"/>
        <end position="38"/>
    </location>
    <ligand>
        <name>ATP</name>
        <dbReference type="ChEBI" id="CHEBI:30616"/>
    </ligand>
</feature>
<keyword id="KW-0067">ATP-binding</keyword>
<keyword id="KW-0227">DNA damage</keyword>
<keyword id="KW-0234">DNA repair</keyword>
<keyword id="KW-0238">DNA-binding</keyword>
<keyword id="KW-0269">Exonuclease</keyword>
<keyword id="KW-0347">Helicase</keyword>
<keyword id="KW-0378">Hydrolase</keyword>
<keyword id="KW-0413">Isomerase</keyword>
<keyword id="KW-0540">Nuclease</keyword>
<keyword id="KW-0547">Nucleotide-binding</keyword>
<comment type="function">
    <text evidence="1">The heterodimer acts as both an ATP-dependent DNA helicase and an ATP-dependent, dual-direction single-stranded exonuclease. Recognizes the chi site generating a DNA molecule suitable for the initiation of homologous recombination. The AddA nuclease domain is required for chi fragment generation; this subunit has the helicase and 3' -&gt; 5' nuclease activities.</text>
</comment>
<comment type="catalytic activity">
    <reaction evidence="1">
        <text>Couples ATP hydrolysis with the unwinding of duplex DNA by translocating in the 3'-5' direction.</text>
        <dbReference type="EC" id="5.6.2.4"/>
    </reaction>
</comment>
<comment type="catalytic activity">
    <reaction evidence="1">
        <text>ATP + H2O = ADP + phosphate + H(+)</text>
        <dbReference type="Rhea" id="RHEA:13065"/>
        <dbReference type="ChEBI" id="CHEBI:15377"/>
        <dbReference type="ChEBI" id="CHEBI:15378"/>
        <dbReference type="ChEBI" id="CHEBI:30616"/>
        <dbReference type="ChEBI" id="CHEBI:43474"/>
        <dbReference type="ChEBI" id="CHEBI:456216"/>
        <dbReference type="EC" id="5.6.2.4"/>
    </reaction>
</comment>
<comment type="cofactor">
    <cofactor evidence="1">
        <name>Mg(2+)</name>
        <dbReference type="ChEBI" id="CHEBI:18420"/>
    </cofactor>
</comment>
<comment type="subunit">
    <text evidence="1">Heterodimer of AddA and AddB/RexB.</text>
</comment>
<comment type="similarity">
    <text evidence="1">Belongs to the helicase family. AddA subfamily.</text>
</comment>
<sequence>MTIPEKPQGVIWTDAQWQSIYATGQDVLVAAAAGSGKTAVLVERIIQKILRDGIDVDRLLVVTFTNLSAREMKHRVDQRIQEASIADPANAHLKNQRIKIHQAQISTLHSFCLKLIQQHYDVLNIDPNFRTSSEAENILLLEQTIDEVIEQHYDILDPAFIELTEQLSSDRSDDQFRMIIKQLYFFSVANPNPKNWLDQLVTPYEEEAQQAQLIQLLTDLSKVFITAAYDALNKAYDLFSMMDSVDKHLAVIEDERRLMGRVLEGGFIDIPYLTGHEFGARLPNVTAKIKEANEMMVDALEDAKLQYKKYKSLIDKVKSDYFSREADDLKADMQQLAPRVKYLARIVKDVMSEFNRKKRSKNILDFSDYEHFALQILTNEDGSPSEIAESYRQHFQEILVDEYQDTNRVQEKILSCIKTGDEHNGNLFMVGDVKQSIYKFRQADPSLFIEKYQRFTIDGDGTGRRIDLSQNFRSRKEVLSTTNYIFKHMMDEQVGEVKYDEAAQLYYGAPYDESDHPVNLKVLVEADQEHSDLTGSEQEAHFIVEQVKDILEHQKVYDMKTGSYRSATYKDIVILERSFGQARNLQQAFKNEDIPFHVNSREGYFEQTEVRLVLSFLRAIDNPLQDIYLVGLMRSVIYQFKEDELAQIRILSPNDDYFYQSIVNYINDEAADAILVDKLKMFLSDIQSYQQYSKDHPVYQLIDKFYNDHYVIQYFSGLIGGRGRRANLYGLFNKAIEFENSSFRGLYQFIRFIDELIERGKDFGEENVVGPNDNVVRMMTIHSSKGLEFPFVIYSGLSKDFNKRDLKQPVILNQQFGLGMDYFDVDKEMAFPSLASVAYRAVAEKELVSEEMRLVYVALTRAKEQLYLIGRVKNDKSLLELEQLSISGEHIAVNERLTSPNPFHLIYSILSKHQSASIPDDLKFEKDIAQIEDSSRPNVNISIVYFEDVSTETILDNDEYRSVNQLETMQNGNEDVKAQIKHQLDYRYPYVNDTKKPSKQSVSELKRQYETEESGTSYERVRQYRIGFSTYERPKFLSEQGKRKANEIGTLMHTVMQHLPFKKERISEVELHQYIDGLIDKHIIEADAKKDIRMDEIMTFINSELYSIIAEAEQVYRELPFVVNQALVDQLPQGDEDVSIIQGMIDLIFVKDGVHYFVDYKTDAFNRRRGMTDEEIGTQLKNKYKIQMKYYQNTLQTILNKEVKGYLYFFKFGTLQL</sequence>
<reference key="1">
    <citation type="journal article" date="2007" name="BMC Microbiol.">
        <title>Subtle genetic changes enhance virulence of methicillin resistant and sensitive Staphylococcus aureus.</title>
        <authorList>
            <person name="Highlander S.K."/>
            <person name="Hulten K.G."/>
            <person name="Qin X."/>
            <person name="Jiang H."/>
            <person name="Yerrapragada S."/>
            <person name="Mason E.O. Jr."/>
            <person name="Shang Y."/>
            <person name="Williams T.M."/>
            <person name="Fortunov R.M."/>
            <person name="Liu Y."/>
            <person name="Igboeli O."/>
            <person name="Petrosino J."/>
            <person name="Tirumalai M."/>
            <person name="Uzman A."/>
            <person name="Fox G.E."/>
            <person name="Cardenas A.M."/>
            <person name="Muzny D.M."/>
            <person name="Hemphill L."/>
            <person name="Ding Y."/>
            <person name="Dugan S."/>
            <person name="Blyth P.R."/>
            <person name="Buhay C.J."/>
            <person name="Dinh H.H."/>
            <person name="Hawes A.C."/>
            <person name="Holder M."/>
            <person name="Kovar C.L."/>
            <person name="Lee S.L."/>
            <person name="Liu W."/>
            <person name="Nazareth L.V."/>
            <person name="Wang Q."/>
            <person name="Zhou J."/>
            <person name="Kaplan S.L."/>
            <person name="Weinstock G.M."/>
        </authorList>
    </citation>
    <scope>NUCLEOTIDE SEQUENCE [LARGE SCALE GENOMIC DNA]</scope>
    <source>
        <strain>USA300 / TCH1516</strain>
    </source>
</reference>
<organism>
    <name type="scientific">Staphylococcus aureus (strain USA300 / TCH1516)</name>
    <dbReference type="NCBI Taxonomy" id="451516"/>
    <lineage>
        <taxon>Bacteria</taxon>
        <taxon>Bacillati</taxon>
        <taxon>Bacillota</taxon>
        <taxon>Bacilli</taxon>
        <taxon>Bacillales</taxon>
        <taxon>Staphylococcaceae</taxon>
        <taxon>Staphylococcus</taxon>
    </lineage>
</organism>
<name>ADDA_STAAT</name>
<evidence type="ECO:0000255" key="1">
    <source>
        <dbReference type="HAMAP-Rule" id="MF_01451"/>
    </source>
</evidence>
<accession>A8Z073</accession>